<comment type="function">
    <text evidence="1">Picornain 3C-like protease is a thiol protease that cleaves the P1 and P2 polyproteins.</text>
</comment>
<comment type="catalytic activity">
    <reaction evidence="3">
        <text>RNA(n) + a ribonucleoside 5'-triphosphate = RNA(n+1) + diphosphate</text>
        <dbReference type="Rhea" id="RHEA:21248"/>
        <dbReference type="Rhea" id="RHEA-COMP:14527"/>
        <dbReference type="Rhea" id="RHEA-COMP:17342"/>
        <dbReference type="ChEBI" id="CHEBI:33019"/>
        <dbReference type="ChEBI" id="CHEBI:61557"/>
        <dbReference type="ChEBI" id="CHEBI:140395"/>
        <dbReference type="EC" id="2.7.7.48"/>
    </reaction>
</comment>
<comment type="subcellular location">
    <molecule>Viral genome-linked protein</molecule>
    <subcellularLocation>
        <location evidence="1">Host endoplasmic reticulum lumen</location>
    </subcellularLocation>
</comment>
<comment type="subcellular location">
    <molecule>Putative ATP-dependent helicase</molecule>
    <subcellularLocation>
        <location evidence="1">Host endoplasmic reticulum membrane</location>
        <topology evidence="1">Single-pass membrane protein</topology>
    </subcellularLocation>
</comment>
<comment type="PTM">
    <text evidence="1">Specific enzymatic cleavages by picornain 3C-like protease in vivo yield mature proteins. Picornain 3C-like protease is autocatalytically processed (By similarity).</text>
</comment>
<comment type="PTM">
    <text evidence="1">VPg is uridylylated by the polymerase and is covalently linked to the 5'-end of genomic RNA. This uridylylated form acts as a nucleotide-peptide primer for the polymerase (By similarity).</text>
</comment>
<comment type="similarity">
    <text evidence="6">Belongs to the nepoviruses RNA1 polyprotein family.</text>
</comment>
<reference key="1">
    <citation type="journal article" date="2004" name="Arch. Virol.">
        <title>Cloning and sequencing of full-length cDNAs of RNA1 and RNA2 of a Tomato black ring virus isolate from Poland.</title>
        <authorList>
            <person name="Jonczyk M."/>
            <person name="Le Gall O."/>
            <person name="Palucha A."/>
            <person name="Borodynko N."/>
            <person name="Pospieszny H."/>
        </authorList>
    </citation>
    <scope>NUCLEOTIDE SEQUENCE [GENOMIC RNA]</scope>
</reference>
<evidence type="ECO:0000250" key="1"/>
<evidence type="ECO:0000255" key="2"/>
<evidence type="ECO:0000255" key="3">
    <source>
        <dbReference type="PROSITE-ProRule" id="PRU00539"/>
    </source>
</evidence>
<evidence type="ECO:0000255" key="4">
    <source>
        <dbReference type="PROSITE-ProRule" id="PRU00551"/>
    </source>
</evidence>
<evidence type="ECO:0000255" key="5">
    <source>
        <dbReference type="PROSITE-ProRule" id="PRU01222"/>
    </source>
</evidence>
<evidence type="ECO:0000305" key="6"/>
<keyword id="KW-0067">ATP-binding</keyword>
<keyword id="KW-0191">Covalent protein-RNA linkage</keyword>
<keyword id="KW-0347">Helicase</keyword>
<keyword id="KW-1038">Host endoplasmic reticulum</keyword>
<keyword id="KW-1043">Host membrane</keyword>
<keyword id="KW-0378">Hydrolase</keyword>
<keyword id="KW-0472">Membrane</keyword>
<keyword id="KW-0547">Nucleotide-binding</keyword>
<keyword id="KW-0548">Nucleotidyltransferase</keyword>
<keyword id="KW-0645">Protease</keyword>
<keyword id="KW-0694">RNA-binding</keyword>
<keyword id="KW-0696">RNA-directed RNA polymerase</keyword>
<keyword id="KW-0788">Thiol protease</keyword>
<keyword id="KW-0808">Transferase</keyword>
<keyword id="KW-0812">Transmembrane</keyword>
<keyword id="KW-1133">Transmembrane helix</keyword>
<keyword id="KW-0693">Viral RNA replication</keyword>
<name>POL1_TBRVM</name>
<proteinExistence type="inferred from homology"/>
<accession>Q8B8X3</accession>
<organism>
    <name type="scientific">Tomato black ring virus (strain MJ)</name>
    <name type="common">TBRV</name>
    <dbReference type="NCBI Taxonomy" id="283677"/>
    <lineage>
        <taxon>Viruses</taxon>
        <taxon>Riboviria</taxon>
        <taxon>Orthornavirae</taxon>
        <taxon>Pisuviricota</taxon>
        <taxon>Pisoniviricetes</taxon>
        <taxon>Picornavirales</taxon>
        <taxon>Secoviridae</taxon>
        <taxon>Comovirinae</taxon>
        <taxon>Nepovirus</taxon>
        <taxon>Nepovirus betae</taxon>
    </lineage>
</organism>
<dbReference type="EC" id="3.6.4.-"/>
<dbReference type="EC" id="3.4.22.-"/>
<dbReference type="EC" id="2.7.7.48"/>
<dbReference type="EMBL" id="AY157993">
    <property type="protein sequence ID" value="AAN72830.1"/>
    <property type="molecule type" value="Genomic_RNA"/>
</dbReference>
<dbReference type="RefSeq" id="NP_958814.1">
    <property type="nucleotide sequence ID" value="NC_004439.1"/>
</dbReference>
<dbReference type="SMR" id="Q8B8X3"/>
<dbReference type="MEROPS" id="C03.025"/>
<dbReference type="GeneID" id="956643"/>
<dbReference type="KEGG" id="vg:956643"/>
<dbReference type="Proteomes" id="UP000201135">
    <property type="component" value="Genome"/>
</dbReference>
<dbReference type="GO" id="GO:0044166">
    <property type="term" value="C:host cell endoplasmic reticulum lumen"/>
    <property type="evidence" value="ECO:0007669"/>
    <property type="project" value="UniProtKB-SubCell"/>
</dbReference>
<dbReference type="GO" id="GO:0044167">
    <property type="term" value="C:host cell endoplasmic reticulum membrane"/>
    <property type="evidence" value="ECO:0007669"/>
    <property type="project" value="UniProtKB-SubCell"/>
</dbReference>
<dbReference type="GO" id="GO:0016020">
    <property type="term" value="C:membrane"/>
    <property type="evidence" value="ECO:0007669"/>
    <property type="project" value="UniProtKB-KW"/>
</dbReference>
<dbReference type="GO" id="GO:0005524">
    <property type="term" value="F:ATP binding"/>
    <property type="evidence" value="ECO:0007669"/>
    <property type="project" value="UniProtKB-KW"/>
</dbReference>
<dbReference type="GO" id="GO:0004197">
    <property type="term" value="F:cysteine-type endopeptidase activity"/>
    <property type="evidence" value="ECO:0007669"/>
    <property type="project" value="InterPro"/>
</dbReference>
<dbReference type="GO" id="GO:0003723">
    <property type="term" value="F:RNA binding"/>
    <property type="evidence" value="ECO:0007669"/>
    <property type="project" value="UniProtKB-KW"/>
</dbReference>
<dbReference type="GO" id="GO:0003724">
    <property type="term" value="F:RNA helicase activity"/>
    <property type="evidence" value="ECO:0007669"/>
    <property type="project" value="InterPro"/>
</dbReference>
<dbReference type="GO" id="GO:0003968">
    <property type="term" value="F:RNA-directed RNA polymerase activity"/>
    <property type="evidence" value="ECO:0007669"/>
    <property type="project" value="UniProtKB-KW"/>
</dbReference>
<dbReference type="GO" id="GO:0006351">
    <property type="term" value="P:DNA-templated transcription"/>
    <property type="evidence" value="ECO:0007669"/>
    <property type="project" value="InterPro"/>
</dbReference>
<dbReference type="GO" id="GO:0006508">
    <property type="term" value="P:proteolysis"/>
    <property type="evidence" value="ECO:0007669"/>
    <property type="project" value="UniProtKB-KW"/>
</dbReference>
<dbReference type="GO" id="GO:0039694">
    <property type="term" value="P:viral RNA genome replication"/>
    <property type="evidence" value="ECO:0007669"/>
    <property type="project" value="InterPro"/>
</dbReference>
<dbReference type="Gene3D" id="1.20.960.20">
    <property type="match status" value="1"/>
</dbReference>
<dbReference type="Gene3D" id="3.30.70.270">
    <property type="match status" value="1"/>
</dbReference>
<dbReference type="InterPro" id="IPR043502">
    <property type="entry name" value="DNA/RNA_pol_sf"/>
</dbReference>
<dbReference type="InterPro" id="IPR000605">
    <property type="entry name" value="Helicase_SF3_ssDNA/RNA_vir"/>
</dbReference>
<dbReference type="InterPro" id="IPR014759">
    <property type="entry name" value="Helicase_SF3_ssRNA_vir"/>
</dbReference>
<dbReference type="InterPro" id="IPR044067">
    <property type="entry name" value="PCV_3C_PRO"/>
</dbReference>
<dbReference type="InterPro" id="IPR043128">
    <property type="entry name" value="Rev_trsase/Diguanyl_cyclase"/>
</dbReference>
<dbReference type="InterPro" id="IPR001205">
    <property type="entry name" value="RNA-dir_pol_C"/>
</dbReference>
<dbReference type="InterPro" id="IPR007094">
    <property type="entry name" value="RNA-dir_pol_PSvirus"/>
</dbReference>
<dbReference type="Pfam" id="PF00680">
    <property type="entry name" value="RdRP_1"/>
    <property type="match status" value="1"/>
</dbReference>
<dbReference type="Pfam" id="PF00910">
    <property type="entry name" value="RNA_helicase"/>
    <property type="match status" value="1"/>
</dbReference>
<dbReference type="SUPFAM" id="SSF56672">
    <property type="entry name" value="DNA/RNA polymerases"/>
    <property type="match status" value="1"/>
</dbReference>
<dbReference type="PROSITE" id="PS51874">
    <property type="entry name" value="PCV_3C_PRO"/>
    <property type="match status" value="1"/>
</dbReference>
<dbReference type="PROSITE" id="PS50507">
    <property type="entry name" value="RDRP_SSRNA_POS"/>
    <property type="match status" value="1"/>
</dbReference>
<dbReference type="PROSITE" id="PS51218">
    <property type="entry name" value="SF3_HELICASE_2"/>
    <property type="match status" value="1"/>
</dbReference>
<sequence>MSVTLSPPGDCFTFNHVKYNNSLNKYLFYNNNLDIVLDDFDFYFNFYAKKYNVLSSFFSDRVLSALYTPMSVSEAASLALEDFCELALDKLKINPFHQLWEETLANWPVYPGTSLLDFFRTQYEIRREVAEASAEALRLKKATRADAFADEVKFLIKNGVLPHLAGDFARKIWSTGKDQKKTRTAFLVKIKKANQLKQQWNSARSLAAARAEVLREFEPSPQQIQKAIEAQLFAEKLGRKYATLTARVRAKRAAARELREKQLYQETVDLLNASLLPPMEKVEIERKYRKVRPTGANVVHQVVANPLGSLCPYMGLGAKTADVRCQATLMAGKIHAQYPRLATAIYAWVIGPAAHFECITPVRNFVKGLTFMVDFFPEEALIHELNEITTEAVCIGASMVLDEERAKLEAHAQSANCRANVFMKAMAGVKNMAKCAYTGFKTGCEEAGRSLAEGICSVMMRSFRECIAQIKTELGCAIEMVEVMIKKVKDWFYSMLEKLQCGLETLGSYAMYALAILLGCGLTSLLERCIGGQGILTKLFITGVLAAIGLQAAGGFDNLQREMVQLCTALAAGIFDIQHAGNGKYKPSWDITAEHAREDARDSNVRSIPIISGVIEALAQFGTGLCSMQSATLIEIGKIGAACHSMRMGKEALKEFCATLMYYLGRIADKVTGRETIFFDELSTLVHVDVRGWIKRAQSCMRESFHTEIGNQFFRDMVAQLVDEGQKLQIGVNGIPRKISADYSQLIGQIMKDLVELHKRTIRAGISEGRRCEPVWIYLFGQRHCGKSNFMSTLDNALAKHFNLPNTTAYRNCKDAFYSGYSGQTFFHMDDLSSVKLEPPLEAELINLVSCQEVPLNMADLADKPIYFRSPFIISSSNFEDVPAGCGVRDIEAYRARKACLVEMRRKPGVIYDPENPLLASQARFKDPMYQTLINGQTEETSWMEMDDVVTEIINISARHRSAQEKLQARYMREKALLDPLALASESFLVKEAQKVFLDFDGVELEKAGVPRPEGGHGLYVDGVLYLVNASFEFDEIPIKDGGYQRLWDSRMRKKFLPAIQRDEHLNTKSMVVTGFLRSLVNGECAVLSKDTLTASATTAQLSIFKALRLEERVYLRTLQHQLDLYSQDIPENPYCNSAWVKVLGAIGAGRDYLVQNGCGILMIAAALILILVSGWGFWKLFVGLFSGTMSLGAAITGMSAVDIKAQQSSASQEKGYRARNIPIHHRYAYARSQAGDGLLPAARLCVAIYQPGGGFVSAMQYKNKSVRMTRHQALRFKEGEQLTVIFASTGESQLIRWHKYHMREEHGSEIVTWLAPSLPALSPDLKDLFLEDKEVDLPNHFKTIGYVLRVDSTAFHYDTLDTYGAVDKTPLPLKGVVGNELYLHEIPEKIVFHYESRNDDCGMIMLCQIRGKMRVVGMLVAGKDKTSWADIMPPNSLAELKSQIDYIPEFGEACDGYFKAGYVHKSEAPTLPKKTNMVPVPESLRVPCDVPVKEPAVLTKDDPRCPIGVDPPRAALKKKFTQPMMELEQEILDEVATDILETWYDCEDHVLSDISLSVAINGIPADSEEAELENFVMKTSPGYPYFKNNRAEKLKGKHAYFEEAEDGSLQLKKGGMAAELHENLVEFTKNEVPELVVIECTKDELLPERKIKVGACRLFEIMPLHYNLFLRQKTCAFTQFLQHNRHRLPCQVGTNPYSREWGHMLNRLMRPKTNEAINCDYSGFDGLLNPQLIECIARMINRLYALSGESDVQQAQRYNMLMALVGRYAFVGQQVYKVNCGLPSGFALTVVVNSVFNEILIRYAYKKLAPAPERNRFGSTVCLLVYGDDNLISVSPSIASWFTGEAIRITLAEKKVKITDGSDKDAPTIEAKSFWELDFLKRKFLKLDNGIVQAPLDRSAIFSSLYWLTPDKSKFHESQKPSDFQGEVDVIEELLLNVNVALMELYLHNDVAEFQRVRGFYAQRLPLMVSQLRTWAFCEAFHSAQQTGMQKYDPAVVLDHMSGVDFKRFMHMSEQGNKAHFYTEMLGVSGPHYKPQEGDFIVSNQPLKPGVQGEYVPIVFGEGIGGLPTKKWVGDFGKPSQLKNSKGYLITGLLREQIEAGKRLIFMGPAPYVANNAALISFGSAHKMLIQKDALAHYRNVIPESTSGLEQYFDAPIPQASVGTFYFGDGETYTALCEYKDGKVLQYEGLPTAILNQAAKDRKVPCMVARQWKSKFTVRMACDSNMCPHHSATCANFELAFKQCWLSKCKCAGNNVSKWYGTKFS</sequence>
<protein>
    <recommendedName>
        <fullName>RNA1 polyprotein</fullName>
    </recommendedName>
    <alternativeName>
        <fullName>P1</fullName>
    </alternativeName>
    <component>
        <recommendedName>
            <fullName>P1A protein</fullName>
            <shortName>1A</shortName>
        </recommendedName>
        <alternativeName>
            <fullName>protease cofactor</fullName>
        </alternativeName>
    </component>
    <component>
        <recommendedName>
            <fullName>Putative ATP-dependent helicase</fullName>
            <ecNumber>3.6.4.-</ecNumber>
        </recommendedName>
        <alternativeName>
            <fullName>1B</fullName>
        </alternativeName>
        <alternativeName>
            <fullName>NTP-binding protein</fullName>
            <shortName>NTB</shortName>
        </alternativeName>
        <alternativeName>
            <fullName>membrane-binding protein</fullName>
        </alternativeName>
    </component>
    <component>
        <recommendedName>
            <fullName>Viral genome-linked protein</fullName>
        </recommendedName>
        <alternativeName>
            <fullName>1C-VPg</fullName>
        </alternativeName>
    </component>
    <component>
        <recommendedName>
            <fullName>Picornain 3C-like protease</fullName>
            <shortName>3C-like protease</shortName>
            <ecNumber>3.4.22.-</ecNumber>
        </recommendedName>
        <alternativeName>
            <fullName>1D-PRO</fullName>
        </alternativeName>
    </component>
    <component>
        <recommendedName>
            <fullName>RNA-directed RNA polymerase</fullName>
            <ecNumber>2.7.7.48</ecNumber>
        </recommendedName>
        <alternativeName>
            <fullName>1E-POL</fullName>
        </alternativeName>
    </component>
</protein>
<feature type="chain" id="PRO_0000037075" description="P1A protein" evidence="2">
    <location>
        <begin position="1"/>
        <end position="565"/>
    </location>
</feature>
<feature type="chain" id="PRO_0000037076" description="Putative ATP-dependent helicase" evidence="2">
    <location>
        <begin position="566"/>
        <end position="1205"/>
    </location>
</feature>
<feature type="chain" id="PRO_0000037077" description="Viral genome-linked protein" evidence="1">
    <location>
        <begin position="1206"/>
        <end position="1232"/>
    </location>
</feature>
<feature type="chain" id="PRO_0000037078" description="Picornain 3C-like protease" evidence="2">
    <location>
        <begin position="1233"/>
        <end position="1442"/>
    </location>
</feature>
<feature type="chain" id="PRO_0000037079" description="RNA-directed RNA polymerase" evidence="2">
    <location>
        <begin position="1443"/>
        <end position="2266"/>
    </location>
</feature>
<feature type="topological domain" description="Cytoplasmic" evidence="1">
    <location>
        <begin position="566"/>
        <end position="1158"/>
    </location>
</feature>
<feature type="transmembrane region" description="Helical" evidence="1">
    <location>
        <begin position="1159"/>
        <end position="1179"/>
    </location>
</feature>
<feature type="topological domain" description="Lumenal" evidence="1">
    <location>
        <begin position="1180"/>
        <end position="1205"/>
    </location>
</feature>
<feature type="domain" description="SF3 helicase" evidence="4">
    <location>
        <begin position="751"/>
        <end position="917"/>
    </location>
</feature>
<feature type="domain" description="Peptidase C3" evidence="5">
    <location>
        <begin position="1229"/>
        <end position="1438"/>
    </location>
</feature>
<feature type="domain" description="RdRp catalytic" evidence="3">
    <location>
        <begin position="1715"/>
        <end position="1843"/>
    </location>
</feature>
<feature type="active site" description="For picornain 3C-like protease activity" evidence="5">
    <location>
        <position position="1272"/>
    </location>
</feature>
<feature type="active site" description="For picornain 3C-like protease activity" evidence="5">
    <location>
        <position position="1310"/>
    </location>
</feature>
<feature type="active site" description="For picornain 3C-like protease activity" evidence="5">
    <location>
        <position position="1402"/>
    </location>
</feature>
<feature type="binding site" evidence="4">
    <location>
        <begin position="781"/>
        <end position="788"/>
    </location>
    <ligand>
        <name>ATP</name>
        <dbReference type="ChEBI" id="CHEBI:30616"/>
    </ligand>
</feature>
<organismHost>
    <name type="scientific">Allium porrum</name>
    <name type="common">Leek</name>
    <name type="synonym">Allium ampeloprasum var. porrum</name>
    <dbReference type="NCBI Taxonomy" id="4681"/>
</organismHost>
<organismHost>
    <name type="scientific">Apium graveolens</name>
    <name type="common">Celery</name>
    <dbReference type="NCBI Taxonomy" id="4045"/>
</organismHost>
<organismHost>
    <name type="scientific">Beta vulgaris</name>
    <name type="common">Sugar beet</name>
    <dbReference type="NCBI Taxonomy" id="161934"/>
</organismHost>
<organismHost>
    <name type="scientific">Fraxinus</name>
    <name type="common">ash trees</name>
    <dbReference type="NCBI Taxonomy" id="38871"/>
</organismHost>
<organismHost>
    <name type="scientific">Lactuca sativa</name>
    <name type="common">Garden lettuce</name>
    <dbReference type="NCBI Taxonomy" id="4236"/>
</organismHost>
<organismHost>
    <name type="scientific">Narcissus pseudonarcissus</name>
    <name type="common">Daffodil</name>
    <dbReference type="NCBI Taxonomy" id="39639"/>
</organismHost>
<organismHost>
    <name type="scientific">Phaseolus vulgaris</name>
    <name type="common">Kidney bean</name>
    <name type="synonym">French bean</name>
    <dbReference type="NCBI Taxonomy" id="3885"/>
</organismHost>
<organismHost>
    <name type="scientific">Robinia pseudoacacia</name>
    <name type="common">Black locust</name>
    <dbReference type="NCBI Taxonomy" id="35938"/>
</organismHost>
<organismHost>
    <name type="scientific">Rubus</name>
    <name type="common">bramble</name>
    <dbReference type="NCBI Taxonomy" id="23216"/>
</organismHost>
<organismHost>
    <name type="scientific">Solanum lycopersicum</name>
    <name type="common">Tomato</name>
    <name type="synonym">Lycopersicon esculentum</name>
    <dbReference type="NCBI Taxonomy" id="4081"/>
</organismHost>
<organismHost>
    <name type="scientific">Solanum tuberosum</name>
    <name type="common">Potato</name>
    <dbReference type="NCBI Taxonomy" id="4113"/>
</organismHost>
<organismHost>
    <name type="scientific">Tulipa</name>
    <dbReference type="NCBI Taxonomy" id="13305"/>
</organismHost>
<organismHost>
    <name type="scientific">Vitis sp.</name>
    <name type="common">Grape</name>
    <dbReference type="NCBI Taxonomy" id="3604"/>
</organismHost>